<name>HA22D_ARATH</name>
<protein>
    <recommendedName>
        <fullName>HVA22-like protein d</fullName>
        <shortName>AtHVA22d</shortName>
    </recommendedName>
</protein>
<accession>Q9S760</accession>
<accession>Q9SW30</accession>
<proteinExistence type="evidence at transcript level"/>
<reference key="1">
    <citation type="journal article" date="2002" name="Plant Mol. Biol.">
        <title>AtHVA22 gene family in Arabidopsis: phylogenetic relationship, ABA and stress regulation, and tissue-specific expression.</title>
        <authorList>
            <person name="Chen C.-N."/>
            <person name="Chu C.-C."/>
            <person name="Zentella R."/>
            <person name="Pan S.-M."/>
            <person name="Ho T.-H.D."/>
        </authorList>
    </citation>
    <scope>NUCLEOTIDE SEQUENCE [GENOMIC DNA / MRNA]</scope>
    <scope>TISSUE SPECIFICITY</scope>
    <scope>INDUCTION</scope>
    <source>
        <strain>cv. Columbia</strain>
    </source>
</reference>
<reference key="2">
    <citation type="journal article" date="1999" name="Nature">
        <title>Sequence and analysis of chromosome 4 of the plant Arabidopsis thaliana.</title>
        <authorList>
            <person name="Mayer K.F.X."/>
            <person name="Schueller C."/>
            <person name="Wambutt R."/>
            <person name="Murphy G."/>
            <person name="Volckaert G."/>
            <person name="Pohl T."/>
            <person name="Duesterhoeft A."/>
            <person name="Stiekema W."/>
            <person name="Entian K.-D."/>
            <person name="Terryn N."/>
            <person name="Harris B."/>
            <person name="Ansorge W."/>
            <person name="Brandt P."/>
            <person name="Grivell L.A."/>
            <person name="Rieger M."/>
            <person name="Weichselgartner M."/>
            <person name="de Simone V."/>
            <person name="Obermaier B."/>
            <person name="Mache R."/>
            <person name="Mueller M."/>
            <person name="Kreis M."/>
            <person name="Delseny M."/>
            <person name="Puigdomenech P."/>
            <person name="Watson M."/>
            <person name="Schmidtheini T."/>
            <person name="Reichert B."/>
            <person name="Portetelle D."/>
            <person name="Perez-Alonso M."/>
            <person name="Boutry M."/>
            <person name="Bancroft I."/>
            <person name="Vos P."/>
            <person name="Hoheisel J."/>
            <person name="Zimmermann W."/>
            <person name="Wedler H."/>
            <person name="Ridley P."/>
            <person name="Langham S.-A."/>
            <person name="McCullagh B."/>
            <person name="Bilham L."/>
            <person name="Robben J."/>
            <person name="van der Schueren J."/>
            <person name="Grymonprez B."/>
            <person name="Chuang Y.-J."/>
            <person name="Vandenbussche F."/>
            <person name="Braeken M."/>
            <person name="Weltjens I."/>
            <person name="Voet M."/>
            <person name="Bastiaens I."/>
            <person name="Aert R."/>
            <person name="Defoor E."/>
            <person name="Weitzenegger T."/>
            <person name="Bothe G."/>
            <person name="Ramsperger U."/>
            <person name="Hilbert H."/>
            <person name="Braun M."/>
            <person name="Holzer E."/>
            <person name="Brandt A."/>
            <person name="Peters S."/>
            <person name="van Staveren M."/>
            <person name="Dirkse W."/>
            <person name="Mooijman P."/>
            <person name="Klein Lankhorst R."/>
            <person name="Rose M."/>
            <person name="Hauf J."/>
            <person name="Koetter P."/>
            <person name="Berneiser S."/>
            <person name="Hempel S."/>
            <person name="Feldpausch M."/>
            <person name="Lamberth S."/>
            <person name="Van den Daele H."/>
            <person name="De Keyser A."/>
            <person name="Buysshaert C."/>
            <person name="Gielen J."/>
            <person name="Villarroel R."/>
            <person name="De Clercq R."/>
            <person name="van Montagu M."/>
            <person name="Rogers J."/>
            <person name="Cronin A."/>
            <person name="Quail M.A."/>
            <person name="Bray-Allen S."/>
            <person name="Clark L."/>
            <person name="Doggett J."/>
            <person name="Hall S."/>
            <person name="Kay M."/>
            <person name="Lennard N."/>
            <person name="McLay K."/>
            <person name="Mayes R."/>
            <person name="Pettett A."/>
            <person name="Rajandream M.A."/>
            <person name="Lyne M."/>
            <person name="Benes V."/>
            <person name="Rechmann S."/>
            <person name="Borkova D."/>
            <person name="Bloecker H."/>
            <person name="Scharfe M."/>
            <person name="Grimm M."/>
            <person name="Loehnert T.-H."/>
            <person name="Dose S."/>
            <person name="de Haan M."/>
            <person name="Maarse A.C."/>
            <person name="Schaefer M."/>
            <person name="Mueller-Auer S."/>
            <person name="Gabel C."/>
            <person name="Fuchs M."/>
            <person name="Fartmann B."/>
            <person name="Granderath K."/>
            <person name="Dauner D."/>
            <person name="Herzl A."/>
            <person name="Neumann S."/>
            <person name="Argiriou A."/>
            <person name="Vitale D."/>
            <person name="Liguori R."/>
            <person name="Piravandi E."/>
            <person name="Massenet O."/>
            <person name="Quigley F."/>
            <person name="Clabauld G."/>
            <person name="Muendlein A."/>
            <person name="Felber R."/>
            <person name="Schnabl S."/>
            <person name="Hiller R."/>
            <person name="Schmidt W."/>
            <person name="Lecharny A."/>
            <person name="Aubourg S."/>
            <person name="Chefdor F."/>
            <person name="Cooke R."/>
            <person name="Berger C."/>
            <person name="Monfort A."/>
            <person name="Casacuberta E."/>
            <person name="Gibbons T."/>
            <person name="Weber N."/>
            <person name="Vandenbol M."/>
            <person name="Bargues M."/>
            <person name="Terol J."/>
            <person name="Torres A."/>
            <person name="Perez-Perez A."/>
            <person name="Purnelle B."/>
            <person name="Bent E."/>
            <person name="Johnson S."/>
            <person name="Tacon D."/>
            <person name="Jesse T."/>
            <person name="Heijnen L."/>
            <person name="Schwarz S."/>
            <person name="Scholler P."/>
            <person name="Heber S."/>
            <person name="Francs P."/>
            <person name="Bielke C."/>
            <person name="Frishman D."/>
            <person name="Haase D."/>
            <person name="Lemcke K."/>
            <person name="Mewes H.-W."/>
            <person name="Stocker S."/>
            <person name="Zaccaria P."/>
            <person name="Bevan M."/>
            <person name="Wilson R.K."/>
            <person name="de la Bastide M."/>
            <person name="Habermann K."/>
            <person name="Parnell L."/>
            <person name="Dedhia N."/>
            <person name="Gnoj L."/>
            <person name="Schutz K."/>
            <person name="Huang E."/>
            <person name="Spiegel L."/>
            <person name="Sekhon M."/>
            <person name="Murray J."/>
            <person name="Sheet P."/>
            <person name="Cordes M."/>
            <person name="Abu-Threideh J."/>
            <person name="Stoneking T."/>
            <person name="Kalicki J."/>
            <person name="Graves T."/>
            <person name="Harmon G."/>
            <person name="Edwards J."/>
            <person name="Latreille P."/>
            <person name="Courtney L."/>
            <person name="Cloud J."/>
            <person name="Abbott A."/>
            <person name="Scott K."/>
            <person name="Johnson D."/>
            <person name="Minx P."/>
            <person name="Bentley D."/>
            <person name="Fulton B."/>
            <person name="Miller N."/>
            <person name="Greco T."/>
            <person name="Kemp K."/>
            <person name="Kramer J."/>
            <person name="Fulton L."/>
            <person name="Mardis E."/>
            <person name="Dante M."/>
            <person name="Pepin K."/>
            <person name="Hillier L.W."/>
            <person name="Nelson J."/>
            <person name="Spieth J."/>
            <person name="Ryan E."/>
            <person name="Andrews S."/>
            <person name="Geisel C."/>
            <person name="Layman D."/>
            <person name="Du H."/>
            <person name="Ali J."/>
            <person name="Berghoff A."/>
            <person name="Jones K."/>
            <person name="Drone K."/>
            <person name="Cotton M."/>
            <person name="Joshu C."/>
            <person name="Antonoiu B."/>
            <person name="Zidanic M."/>
            <person name="Strong C."/>
            <person name="Sun H."/>
            <person name="Lamar B."/>
            <person name="Yordan C."/>
            <person name="Ma P."/>
            <person name="Zhong J."/>
            <person name="Preston R."/>
            <person name="Vil D."/>
            <person name="Shekher M."/>
            <person name="Matero A."/>
            <person name="Shah R."/>
            <person name="Swaby I.K."/>
            <person name="O'Shaughnessy A."/>
            <person name="Rodriguez M."/>
            <person name="Hoffman J."/>
            <person name="Till S."/>
            <person name="Granat S."/>
            <person name="Shohdy N."/>
            <person name="Hasegawa A."/>
            <person name="Hameed A."/>
            <person name="Lodhi M."/>
            <person name="Johnson A."/>
            <person name="Chen E."/>
            <person name="Marra M.A."/>
            <person name="Martienssen R."/>
            <person name="McCombie W.R."/>
        </authorList>
    </citation>
    <scope>NUCLEOTIDE SEQUENCE [LARGE SCALE GENOMIC DNA]</scope>
    <source>
        <strain>cv. Columbia</strain>
    </source>
</reference>
<reference key="3">
    <citation type="journal article" date="2017" name="Plant J.">
        <title>Araport11: a complete reannotation of the Arabidopsis thaliana reference genome.</title>
        <authorList>
            <person name="Cheng C.Y."/>
            <person name="Krishnakumar V."/>
            <person name="Chan A.P."/>
            <person name="Thibaud-Nissen F."/>
            <person name="Schobel S."/>
            <person name="Town C.D."/>
        </authorList>
    </citation>
    <scope>GENOME REANNOTATION</scope>
    <source>
        <strain>cv. Columbia</strain>
    </source>
</reference>
<reference key="4">
    <citation type="journal article" date="2003" name="Science">
        <title>Empirical analysis of transcriptional activity in the Arabidopsis genome.</title>
        <authorList>
            <person name="Yamada K."/>
            <person name="Lim J."/>
            <person name="Dale J.M."/>
            <person name="Chen H."/>
            <person name="Shinn P."/>
            <person name="Palm C.J."/>
            <person name="Southwick A.M."/>
            <person name="Wu H.C."/>
            <person name="Kim C.J."/>
            <person name="Nguyen M."/>
            <person name="Pham P.K."/>
            <person name="Cheuk R.F."/>
            <person name="Karlin-Newmann G."/>
            <person name="Liu S.X."/>
            <person name="Lam B."/>
            <person name="Sakano H."/>
            <person name="Wu T."/>
            <person name="Yu G."/>
            <person name="Miranda M."/>
            <person name="Quach H.L."/>
            <person name="Tripp M."/>
            <person name="Chang C.H."/>
            <person name="Lee J.M."/>
            <person name="Toriumi M.J."/>
            <person name="Chan M.M."/>
            <person name="Tang C.C."/>
            <person name="Onodera C.S."/>
            <person name="Deng J.M."/>
            <person name="Akiyama K."/>
            <person name="Ansari Y."/>
            <person name="Arakawa T."/>
            <person name="Banh J."/>
            <person name="Banno F."/>
            <person name="Bowser L."/>
            <person name="Brooks S.Y."/>
            <person name="Carninci P."/>
            <person name="Chao Q."/>
            <person name="Choy N."/>
            <person name="Enju A."/>
            <person name="Goldsmith A.D."/>
            <person name="Gurjal M."/>
            <person name="Hansen N.F."/>
            <person name="Hayashizaki Y."/>
            <person name="Johnson-Hopson C."/>
            <person name="Hsuan V.W."/>
            <person name="Iida K."/>
            <person name="Karnes M."/>
            <person name="Khan S."/>
            <person name="Koesema E."/>
            <person name="Ishida J."/>
            <person name="Jiang P.X."/>
            <person name="Jones T."/>
            <person name="Kawai J."/>
            <person name="Kamiya A."/>
            <person name="Meyers C."/>
            <person name="Nakajima M."/>
            <person name="Narusaka M."/>
            <person name="Seki M."/>
            <person name="Sakurai T."/>
            <person name="Satou M."/>
            <person name="Tamse R."/>
            <person name="Vaysberg M."/>
            <person name="Wallender E.K."/>
            <person name="Wong C."/>
            <person name="Yamamura Y."/>
            <person name="Yuan S."/>
            <person name="Shinozaki K."/>
            <person name="Davis R.W."/>
            <person name="Theologis A."/>
            <person name="Ecker J.R."/>
        </authorList>
    </citation>
    <scope>NUCLEOTIDE SEQUENCE [LARGE SCALE MRNA]</scope>
    <source>
        <strain>cv. Columbia</strain>
    </source>
</reference>
<reference key="5">
    <citation type="submission" date="2002-03" db="EMBL/GenBank/DDBJ databases">
        <title>Full-length cDNA from Arabidopsis thaliana.</title>
        <authorList>
            <person name="Brover V.V."/>
            <person name="Troukhan M.E."/>
            <person name="Alexandrov N.A."/>
            <person name="Lu Y.-P."/>
            <person name="Flavell R.B."/>
            <person name="Feldmann K.A."/>
        </authorList>
    </citation>
    <scope>NUCLEOTIDE SEQUENCE [LARGE SCALE MRNA]</scope>
</reference>
<sequence>MDKFWTFLTALHSGAGPIVMLLYPLYASVIAMESTTKVDDEQWLAYWIIYSFLSLTELILQSLIEWIPIWYTVKLVFVAWLVLPQFQGAAFIYNRVVREQFKKHGVLRSTHSKPTKPNILHSIFPHREGHEAHSH</sequence>
<comment type="subcellular location">
    <subcellularLocation>
        <location evidence="3">Membrane</location>
        <topology evidence="3">Multi-pass membrane protein</topology>
    </subcellularLocation>
</comment>
<comment type="alternative products">
    <event type="alternative splicing"/>
    <isoform>
        <id>Q9S760-1</id>
        <name>1</name>
        <sequence type="displayed"/>
    </isoform>
    <text>A number of isoforms are produced. According to EST sequences.</text>
</comment>
<comment type="tissue specificity">
    <text evidence="2">Predominantly expressed in flower buds.</text>
</comment>
<comment type="induction">
    <text evidence="2">By abscisic acid (ABA), cold, drought and salt stresses.</text>
</comment>
<comment type="similarity">
    <text evidence="3">Belongs to the DP1 family.</text>
</comment>
<comment type="sequence caution" evidence="3">
    <conflict type="erroneous gene model prediction">
        <sequence resource="EMBL-CDS" id="CAB36738"/>
    </conflict>
</comment>
<comment type="sequence caution" evidence="3">
    <conflict type="erroneous gene model prediction">
        <sequence resource="EMBL-CDS" id="CAB79405"/>
    </conflict>
</comment>
<organism>
    <name type="scientific">Arabidopsis thaliana</name>
    <name type="common">Mouse-ear cress</name>
    <dbReference type="NCBI Taxonomy" id="3702"/>
    <lineage>
        <taxon>Eukaryota</taxon>
        <taxon>Viridiplantae</taxon>
        <taxon>Streptophyta</taxon>
        <taxon>Embryophyta</taxon>
        <taxon>Tracheophyta</taxon>
        <taxon>Spermatophyta</taxon>
        <taxon>Magnoliopsida</taxon>
        <taxon>eudicotyledons</taxon>
        <taxon>Gunneridae</taxon>
        <taxon>Pentapetalae</taxon>
        <taxon>rosids</taxon>
        <taxon>malvids</taxon>
        <taxon>Brassicales</taxon>
        <taxon>Brassicaceae</taxon>
        <taxon>Camelineae</taxon>
        <taxon>Arabidopsis</taxon>
    </lineage>
</organism>
<keyword id="KW-0025">Alternative splicing</keyword>
<keyword id="KW-0472">Membrane</keyword>
<keyword id="KW-1185">Reference proteome</keyword>
<keyword id="KW-0346">Stress response</keyword>
<keyword id="KW-0812">Transmembrane</keyword>
<keyword id="KW-1133">Transmembrane helix</keyword>
<feature type="chain" id="PRO_0000101838" description="HVA22-like protein d">
    <location>
        <begin position="1"/>
        <end position="135"/>
    </location>
</feature>
<feature type="transmembrane region" description="Helical" evidence="1">
    <location>
        <begin position="11"/>
        <end position="31"/>
    </location>
</feature>
<feature type="transmembrane region" description="Helical" evidence="1">
    <location>
        <begin position="42"/>
        <end position="62"/>
    </location>
</feature>
<feature type="transmembrane region" description="Helical" evidence="1">
    <location>
        <begin position="63"/>
        <end position="83"/>
    </location>
</feature>
<gene>
    <name type="primary">HVA22D</name>
    <name type="ordered locus">At4g24960</name>
    <name type="ORF">F13M23.100</name>
</gene>
<evidence type="ECO:0000255" key="1"/>
<evidence type="ECO:0000269" key="2">
    <source>
    </source>
</evidence>
<evidence type="ECO:0000305" key="3"/>
<dbReference type="EMBL" id="AF141662">
    <property type="protein sequence ID" value="AAD31882.1"/>
    <property type="molecule type" value="mRNA"/>
</dbReference>
<dbReference type="EMBL" id="AF141979">
    <property type="protein sequence ID" value="AAD31887.1"/>
    <property type="molecule type" value="Genomic_DNA"/>
</dbReference>
<dbReference type="EMBL" id="AL035523">
    <property type="protein sequence ID" value="CAB36738.1"/>
    <property type="status" value="ALT_SEQ"/>
    <property type="molecule type" value="Genomic_DNA"/>
</dbReference>
<dbReference type="EMBL" id="AL161562">
    <property type="protein sequence ID" value="CAB79405.1"/>
    <property type="status" value="ALT_SEQ"/>
    <property type="molecule type" value="Genomic_DNA"/>
</dbReference>
<dbReference type="EMBL" id="CP002687">
    <property type="protein sequence ID" value="AEE84980.1"/>
    <property type="molecule type" value="Genomic_DNA"/>
</dbReference>
<dbReference type="EMBL" id="AY059750">
    <property type="protein sequence ID" value="AAL24098.1"/>
    <property type="molecule type" value="mRNA"/>
</dbReference>
<dbReference type="EMBL" id="AY113978">
    <property type="protein sequence ID" value="AAM45026.1"/>
    <property type="molecule type" value="mRNA"/>
</dbReference>
<dbReference type="EMBL" id="AY086850">
    <property type="protein sequence ID" value="AAM63898.1"/>
    <property type="molecule type" value="mRNA"/>
</dbReference>
<dbReference type="PIR" id="T05517">
    <property type="entry name" value="T05517"/>
</dbReference>
<dbReference type="RefSeq" id="NP_567713.1">
    <molecule id="Q9S760-1"/>
    <property type="nucleotide sequence ID" value="NM_118628.4"/>
</dbReference>
<dbReference type="BioGRID" id="13886">
    <property type="interactions" value="7"/>
</dbReference>
<dbReference type="FunCoup" id="Q9S760">
    <property type="interactions" value="439"/>
</dbReference>
<dbReference type="STRING" id="3702.Q9S760"/>
<dbReference type="PaxDb" id="3702-AT4G24960.3"/>
<dbReference type="EnsemblPlants" id="AT4G24960.1">
    <molecule id="Q9S760-1"/>
    <property type="protein sequence ID" value="AT4G24960.1"/>
    <property type="gene ID" value="AT4G24960"/>
</dbReference>
<dbReference type="GeneID" id="828598"/>
<dbReference type="Gramene" id="AT4G24960.1">
    <molecule id="Q9S760-1"/>
    <property type="protein sequence ID" value="AT4G24960.1"/>
    <property type="gene ID" value="AT4G24960"/>
</dbReference>
<dbReference type="KEGG" id="ath:AT4G24960"/>
<dbReference type="Araport" id="AT4G24960"/>
<dbReference type="TAIR" id="AT4G24960">
    <property type="gene designation" value="HVA22D"/>
</dbReference>
<dbReference type="eggNOG" id="KOG1725">
    <property type="taxonomic scope" value="Eukaryota"/>
</dbReference>
<dbReference type="HOGENOM" id="CLU_098452_1_1_1"/>
<dbReference type="InParanoid" id="Q9S760"/>
<dbReference type="OMA" id="HFRGASF"/>
<dbReference type="OrthoDB" id="10009287at2759"/>
<dbReference type="PhylomeDB" id="Q9S760"/>
<dbReference type="PRO" id="PR:Q9S760"/>
<dbReference type="Proteomes" id="UP000006548">
    <property type="component" value="Chromosome 4"/>
</dbReference>
<dbReference type="ExpressionAtlas" id="Q9S760">
    <property type="expression patterns" value="baseline and differential"/>
</dbReference>
<dbReference type="GO" id="GO:0016020">
    <property type="term" value="C:membrane"/>
    <property type="evidence" value="ECO:0007669"/>
    <property type="project" value="UniProtKB-SubCell"/>
</dbReference>
<dbReference type="GO" id="GO:0009908">
    <property type="term" value="P:flower development"/>
    <property type="evidence" value="ECO:0000315"/>
    <property type="project" value="TAIR"/>
</dbReference>
<dbReference type="GO" id="GO:0042538">
    <property type="term" value="P:hyperosmotic salinity response"/>
    <property type="evidence" value="ECO:0000270"/>
    <property type="project" value="TAIR"/>
</dbReference>
<dbReference type="GO" id="GO:0010507">
    <property type="term" value="P:negative regulation of autophagy"/>
    <property type="evidence" value="ECO:0000315"/>
    <property type="project" value="TAIR"/>
</dbReference>
<dbReference type="GO" id="GO:0009555">
    <property type="term" value="P:pollen development"/>
    <property type="evidence" value="ECO:0000315"/>
    <property type="project" value="TAIR"/>
</dbReference>
<dbReference type="GO" id="GO:0009737">
    <property type="term" value="P:response to abscisic acid"/>
    <property type="evidence" value="ECO:0000270"/>
    <property type="project" value="TAIR"/>
</dbReference>
<dbReference type="GO" id="GO:0009409">
    <property type="term" value="P:response to cold"/>
    <property type="evidence" value="ECO:0000270"/>
    <property type="project" value="TAIR"/>
</dbReference>
<dbReference type="GO" id="GO:0009414">
    <property type="term" value="P:response to water deprivation"/>
    <property type="evidence" value="ECO:0000270"/>
    <property type="project" value="TAIR"/>
</dbReference>
<dbReference type="InterPro" id="IPR004345">
    <property type="entry name" value="TB2_DP1_HVA22"/>
</dbReference>
<dbReference type="PANTHER" id="PTHR12300:SF116">
    <property type="entry name" value="HVA22-LIKE PROTEIN D"/>
    <property type="match status" value="1"/>
</dbReference>
<dbReference type="PANTHER" id="PTHR12300">
    <property type="entry name" value="HVA22-LIKE PROTEINS"/>
    <property type="match status" value="1"/>
</dbReference>
<dbReference type="Pfam" id="PF03134">
    <property type="entry name" value="TB2_DP1_HVA22"/>
    <property type="match status" value="1"/>
</dbReference>